<name>RL31_BRUC2</name>
<feature type="chain" id="PRO_1000126572" description="Large ribosomal subunit protein bL31">
    <location>
        <begin position="1"/>
        <end position="73"/>
    </location>
</feature>
<protein>
    <recommendedName>
        <fullName evidence="1">Large ribosomal subunit protein bL31</fullName>
    </recommendedName>
    <alternativeName>
        <fullName evidence="2">50S ribosomal protein L31</fullName>
    </alternativeName>
</protein>
<gene>
    <name evidence="1" type="primary">rpmE</name>
    <name type="ordered locus">BCAN_A1754</name>
</gene>
<evidence type="ECO:0000255" key="1">
    <source>
        <dbReference type="HAMAP-Rule" id="MF_00501"/>
    </source>
</evidence>
<evidence type="ECO:0000305" key="2"/>
<sequence>MKANIHPDYHTIKVVMTDGTEYMTRSTWGKEGDTMNLDIDPTTHPAWTGGSQTLLDRGGRVTKFKNRFGNLGI</sequence>
<reference key="1">
    <citation type="submission" date="2007-10" db="EMBL/GenBank/DDBJ databases">
        <title>Brucella canis ATCC 23365 whole genome shotgun sequencing project.</title>
        <authorList>
            <person name="Setubal J.C."/>
            <person name="Bowns C."/>
            <person name="Boyle S."/>
            <person name="Crasta O.R."/>
            <person name="Czar M.J."/>
            <person name="Dharmanolla C."/>
            <person name="Gillespie J.J."/>
            <person name="Kenyon R.W."/>
            <person name="Lu J."/>
            <person name="Mane S."/>
            <person name="Mohapatra S."/>
            <person name="Nagrani S."/>
            <person name="Purkayastha A."/>
            <person name="Rajasimha H.K."/>
            <person name="Shallom J.M."/>
            <person name="Shallom S."/>
            <person name="Shukla M."/>
            <person name="Snyder E.E."/>
            <person name="Sobral B.W."/>
            <person name="Wattam A.R."/>
            <person name="Will R."/>
            <person name="Williams K."/>
            <person name="Yoo H."/>
            <person name="Bruce D."/>
            <person name="Detter C."/>
            <person name="Munk C."/>
            <person name="Brettin T.S."/>
        </authorList>
    </citation>
    <scope>NUCLEOTIDE SEQUENCE [LARGE SCALE GENOMIC DNA]</scope>
    <source>
        <strain>ATCC 23365 / NCTC 10854 / RM-666</strain>
    </source>
</reference>
<accession>A9M7L3</accession>
<organism>
    <name type="scientific">Brucella canis (strain ATCC 23365 / NCTC 10854 / RM-666)</name>
    <dbReference type="NCBI Taxonomy" id="483179"/>
    <lineage>
        <taxon>Bacteria</taxon>
        <taxon>Pseudomonadati</taxon>
        <taxon>Pseudomonadota</taxon>
        <taxon>Alphaproteobacteria</taxon>
        <taxon>Hyphomicrobiales</taxon>
        <taxon>Brucellaceae</taxon>
        <taxon>Brucella/Ochrobactrum group</taxon>
        <taxon>Brucella</taxon>
    </lineage>
</organism>
<comment type="function">
    <text evidence="1">Binds the 23S rRNA.</text>
</comment>
<comment type="subunit">
    <text evidence="1">Part of the 50S ribosomal subunit.</text>
</comment>
<comment type="similarity">
    <text evidence="1">Belongs to the bacterial ribosomal protein bL31 family. Type A subfamily.</text>
</comment>
<keyword id="KW-1185">Reference proteome</keyword>
<keyword id="KW-0687">Ribonucleoprotein</keyword>
<keyword id="KW-0689">Ribosomal protein</keyword>
<keyword id="KW-0694">RNA-binding</keyword>
<keyword id="KW-0699">rRNA-binding</keyword>
<dbReference type="EMBL" id="CP000872">
    <property type="protein sequence ID" value="ABX62760.1"/>
    <property type="molecule type" value="Genomic_DNA"/>
</dbReference>
<dbReference type="RefSeq" id="WP_002964804.1">
    <property type="nucleotide sequence ID" value="NC_010103.1"/>
</dbReference>
<dbReference type="SMR" id="A9M7L3"/>
<dbReference type="GeneID" id="97533132"/>
<dbReference type="KEGG" id="bcs:BCAN_A1754"/>
<dbReference type="HOGENOM" id="CLU_114306_3_2_5"/>
<dbReference type="Proteomes" id="UP000001385">
    <property type="component" value="Chromosome I"/>
</dbReference>
<dbReference type="GO" id="GO:1990904">
    <property type="term" value="C:ribonucleoprotein complex"/>
    <property type="evidence" value="ECO:0007669"/>
    <property type="project" value="UniProtKB-KW"/>
</dbReference>
<dbReference type="GO" id="GO:0005840">
    <property type="term" value="C:ribosome"/>
    <property type="evidence" value="ECO:0007669"/>
    <property type="project" value="UniProtKB-KW"/>
</dbReference>
<dbReference type="GO" id="GO:0019843">
    <property type="term" value="F:rRNA binding"/>
    <property type="evidence" value="ECO:0007669"/>
    <property type="project" value="UniProtKB-KW"/>
</dbReference>
<dbReference type="GO" id="GO:0003735">
    <property type="term" value="F:structural constituent of ribosome"/>
    <property type="evidence" value="ECO:0007669"/>
    <property type="project" value="InterPro"/>
</dbReference>
<dbReference type="GO" id="GO:0006412">
    <property type="term" value="P:translation"/>
    <property type="evidence" value="ECO:0007669"/>
    <property type="project" value="UniProtKB-UniRule"/>
</dbReference>
<dbReference type="Gene3D" id="4.10.830.30">
    <property type="entry name" value="Ribosomal protein L31"/>
    <property type="match status" value="1"/>
</dbReference>
<dbReference type="HAMAP" id="MF_00501">
    <property type="entry name" value="Ribosomal_bL31_1"/>
    <property type="match status" value="1"/>
</dbReference>
<dbReference type="InterPro" id="IPR034704">
    <property type="entry name" value="Ribosomal_bL28/bL31-like_sf"/>
</dbReference>
<dbReference type="InterPro" id="IPR002150">
    <property type="entry name" value="Ribosomal_bL31"/>
</dbReference>
<dbReference type="InterPro" id="IPR027491">
    <property type="entry name" value="Ribosomal_bL31_A"/>
</dbReference>
<dbReference type="InterPro" id="IPR042105">
    <property type="entry name" value="Ribosomal_bL31_sf"/>
</dbReference>
<dbReference type="NCBIfam" id="TIGR00105">
    <property type="entry name" value="L31"/>
    <property type="match status" value="1"/>
</dbReference>
<dbReference type="NCBIfam" id="NF001809">
    <property type="entry name" value="PRK00528.1"/>
    <property type="match status" value="1"/>
</dbReference>
<dbReference type="PANTHER" id="PTHR33280">
    <property type="entry name" value="50S RIBOSOMAL PROTEIN L31, CHLOROPLASTIC"/>
    <property type="match status" value="1"/>
</dbReference>
<dbReference type="PANTHER" id="PTHR33280:SF6">
    <property type="entry name" value="LARGE RIBOSOMAL SUBUNIT PROTEIN BL31A"/>
    <property type="match status" value="1"/>
</dbReference>
<dbReference type="Pfam" id="PF01197">
    <property type="entry name" value="Ribosomal_L31"/>
    <property type="match status" value="1"/>
</dbReference>
<dbReference type="PRINTS" id="PR01249">
    <property type="entry name" value="RIBOSOMALL31"/>
</dbReference>
<dbReference type="SUPFAM" id="SSF143800">
    <property type="entry name" value="L28p-like"/>
    <property type="match status" value="1"/>
</dbReference>
<dbReference type="PROSITE" id="PS01143">
    <property type="entry name" value="RIBOSOMAL_L31"/>
    <property type="match status" value="1"/>
</dbReference>
<proteinExistence type="inferred from homology"/>